<sequence length="241" mass="27769">MKILLVFDFDNTIIDDNSDTWIVQCAPNKKLPIELRDSYRKGFWTEFMGRVFKYLGDKGVREHEMKRAVTSLPFTPGMVELFNFIRKNKDKFDCIIISDSNSVFIDWVLEAASFHDIFDKVFTNPAAFNSNGHLTVENYHTHSCNRCPKNLCKKVVLIEFVDKQLQQGVNYTQIVYIGDGGNDVCPVTFLKNDDVAMPRKGYTLQKTLSRMSQNLEPMEYSVVVWSSGVDIISHLQFLIKD</sequence>
<evidence type="ECO:0000250" key="1">
    <source>
        <dbReference type="UniProtKB" id="Q8TCT1"/>
    </source>
</evidence>
<evidence type="ECO:0000250" key="2">
    <source>
        <dbReference type="UniProtKB" id="Q96GD0"/>
    </source>
</evidence>
<evidence type="ECO:0000269" key="3">
    <source>
    </source>
</evidence>
<evidence type="ECO:0000305" key="4"/>
<feature type="chain" id="PRO_0000068833" description="Pyridoxal phosphate phosphatase PHOSPHO2">
    <location>
        <begin position="1"/>
        <end position="241"/>
    </location>
</feature>
<feature type="active site" description="Nucleophile" evidence="1">
    <location>
        <position position="8"/>
    </location>
</feature>
<feature type="active site" description="Proton donor" evidence="2">
    <location>
        <position position="10"/>
    </location>
</feature>
<feature type="binding site" evidence="2">
    <location>
        <position position="8"/>
    </location>
    <ligand>
        <name>Mg(2+)</name>
        <dbReference type="ChEBI" id="CHEBI:18420"/>
    </ligand>
</feature>
<feature type="binding site" evidence="2">
    <location>
        <position position="10"/>
    </location>
    <ligand>
        <name>Mg(2+)</name>
        <dbReference type="ChEBI" id="CHEBI:18420"/>
    </ligand>
</feature>
<feature type="binding site" evidence="1">
    <location>
        <position position="19"/>
    </location>
    <ligand>
        <name>substrate</name>
    </ligand>
</feature>
<feature type="binding site" evidence="1">
    <location>
        <position position="99"/>
    </location>
    <ligand>
        <name>substrate</name>
    </ligand>
</feature>
<feature type="binding site" evidence="2">
    <location>
        <position position="179"/>
    </location>
    <ligand>
        <name>Mg(2+)</name>
        <dbReference type="ChEBI" id="CHEBI:18420"/>
    </ligand>
</feature>
<feature type="sequence variant" id="VAR_062092" description="In dbSNP:rs56036676.">
    <original>K</original>
    <variation>E</variation>
    <location>
        <position position="206"/>
    </location>
</feature>
<proteinExistence type="evidence at protein level"/>
<organism>
    <name type="scientific">Homo sapiens</name>
    <name type="common">Human</name>
    <dbReference type="NCBI Taxonomy" id="9606"/>
    <lineage>
        <taxon>Eukaryota</taxon>
        <taxon>Metazoa</taxon>
        <taxon>Chordata</taxon>
        <taxon>Craniata</taxon>
        <taxon>Vertebrata</taxon>
        <taxon>Euteleostomi</taxon>
        <taxon>Mammalia</taxon>
        <taxon>Eutheria</taxon>
        <taxon>Euarchontoglires</taxon>
        <taxon>Primates</taxon>
        <taxon>Haplorrhini</taxon>
        <taxon>Catarrhini</taxon>
        <taxon>Hominidae</taxon>
        <taxon>Homo</taxon>
    </lineage>
</organism>
<name>PHOP2_HUMAN</name>
<keyword id="KW-0378">Hydrolase</keyword>
<keyword id="KW-0460">Magnesium</keyword>
<keyword id="KW-0479">Metal-binding</keyword>
<keyword id="KW-1267">Proteomics identification</keyword>
<keyword id="KW-0663">Pyridoxal phosphate</keyword>
<keyword id="KW-1185">Reference proteome</keyword>
<gene>
    <name type="primary">PHOSPHO2</name>
</gene>
<accession>Q8TCD6</accession>
<accession>B2RC30</accession>
<accession>D3DPC7</accession>
<dbReference type="EC" id="3.1.3.74" evidence="3"/>
<dbReference type="EMBL" id="AK314915">
    <property type="protein sequence ID" value="BAG37427.1"/>
    <property type="molecule type" value="mRNA"/>
</dbReference>
<dbReference type="EMBL" id="AC016772">
    <property type="protein sequence ID" value="AAY24234.1"/>
    <property type="molecule type" value="Genomic_DNA"/>
</dbReference>
<dbReference type="EMBL" id="CH471058">
    <property type="protein sequence ID" value="EAX11262.1"/>
    <property type="molecule type" value="Genomic_DNA"/>
</dbReference>
<dbReference type="EMBL" id="CH471058">
    <property type="protein sequence ID" value="EAX11263.1"/>
    <property type="molecule type" value="Genomic_DNA"/>
</dbReference>
<dbReference type="EMBL" id="BC022324">
    <property type="protein sequence ID" value="AAH22324.1"/>
    <property type="molecule type" value="mRNA"/>
</dbReference>
<dbReference type="EMBL" id="BC106013">
    <property type="protein sequence ID" value="AAI06014.1"/>
    <property type="molecule type" value="mRNA"/>
</dbReference>
<dbReference type="CCDS" id="CCDS33319.1"/>
<dbReference type="RefSeq" id="NP_001008489.1">
    <property type="nucleotide sequence ID" value="NM_001008489.4"/>
</dbReference>
<dbReference type="RefSeq" id="NP_001186214.1">
    <property type="nucleotide sequence ID" value="NM_001199285.2"/>
</dbReference>
<dbReference type="RefSeq" id="NP_001186215.1">
    <property type="nucleotide sequence ID" value="NM_001199286.2"/>
</dbReference>
<dbReference type="RefSeq" id="NP_001186216.1">
    <property type="nucleotide sequence ID" value="NM_001199287.2"/>
</dbReference>
<dbReference type="RefSeq" id="NP_001186217.1">
    <property type="nucleotide sequence ID" value="NM_001199288.2"/>
</dbReference>
<dbReference type="BioGRID" id="138930">
    <property type="interactions" value="25"/>
</dbReference>
<dbReference type="FunCoup" id="Q8TCD6">
    <property type="interactions" value="1227"/>
</dbReference>
<dbReference type="IntAct" id="Q8TCD6">
    <property type="interactions" value="14"/>
</dbReference>
<dbReference type="STRING" id="9606.ENSP00000481046"/>
<dbReference type="DEPOD" id="PHOSPHO2"/>
<dbReference type="iPTMnet" id="Q8TCD6"/>
<dbReference type="PhosphoSitePlus" id="Q8TCD6"/>
<dbReference type="BioMuta" id="PHOSPHO2"/>
<dbReference type="DMDM" id="74730590"/>
<dbReference type="MassIVE" id="Q8TCD6"/>
<dbReference type="PaxDb" id="9606-ENSP00000481046"/>
<dbReference type="PeptideAtlas" id="Q8TCD6"/>
<dbReference type="ProteomicsDB" id="74123"/>
<dbReference type="Antibodypedia" id="33816">
    <property type="antibodies" value="97 antibodies from 23 providers"/>
</dbReference>
<dbReference type="DNASU" id="493911"/>
<dbReference type="Ensembl" id="ENST00000359744.8">
    <property type="protein sequence ID" value="ENSP00000352782.3"/>
    <property type="gene ID" value="ENSG00000144362.12"/>
</dbReference>
<dbReference type="Ensembl" id="ENST00000616481.4">
    <property type="protein sequence ID" value="ENSP00000481680.1"/>
    <property type="gene ID" value="ENSG00000144362.12"/>
</dbReference>
<dbReference type="Ensembl" id="ENST00000616524.4">
    <property type="protein sequence ID" value="ENSP00000481046.1"/>
    <property type="gene ID" value="ENSG00000144362.12"/>
</dbReference>
<dbReference type="Ensembl" id="ENST00000617738.4">
    <property type="protein sequence ID" value="ENSP00000481857.1"/>
    <property type="gene ID" value="ENSG00000144362.12"/>
</dbReference>
<dbReference type="GeneID" id="493911"/>
<dbReference type="KEGG" id="hsa:493911"/>
<dbReference type="MANE-Select" id="ENST00000359744.8">
    <property type="protein sequence ID" value="ENSP00000352782.3"/>
    <property type="RefSeq nucleotide sequence ID" value="NM_001008489.4"/>
    <property type="RefSeq protein sequence ID" value="NP_001008489.1"/>
</dbReference>
<dbReference type="UCSC" id="uc002ufg.4">
    <property type="organism name" value="human"/>
</dbReference>
<dbReference type="AGR" id="HGNC:28316"/>
<dbReference type="CTD" id="493911"/>
<dbReference type="DisGeNET" id="493911"/>
<dbReference type="GeneCards" id="PHOSPHO2"/>
<dbReference type="HGNC" id="HGNC:28316">
    <property type="gene designation" value="PHOSPHO2"/>
</dbReference>
<dbReference type="HPA" id="ENSG00000144362">
    <property type="expression patterns" value="Low tissue specificity"/>
</dbReference>
<dbReference type="neXtProt" id="NX_Q8TCD6"/>
<dbReference type="OpenTargets" id="ENSG00000144362"/>
<dbReference type="PharmGKB" id="PA134947617"/>
<dbReference type="VEuPathDB" id="HostDB:ENSG00000144362"/>
<dbReference type="eggNOG" id="KOG3120">
    <property type="taxonomic scope" value="Eukaryota"/>
</dbReference>
<dbReference type="GeneTree" id="ENSGT00390000007741"/>
<dbReference type="HOGENOM" id="CLU_068983_0_1_1"/>
<dbReference type="InParanoid" id="Q8TCD6"/>
<dbReference type="OMA" id="HNLADCF"/>
<dbReference type="OrthoDB" id="10267182at2759"/>
<dbReference type="PAN-GO" id="Q8TCD6">
    <property type="GO annotations" value="1 GO annotation based on evolutionary models"/>
</dbReference>
<dbReference type="PhylomeDB" id="Q8TCD6"/>
<dbReference type="TreeFam" id="TF300112"/>
<dbReference type="BioCyc" id="MetaCyc:HS07168-MONOMER"/>
<dbReference type="PathwayCommons" id="Q8TCD6"/>
<dbReference type="SABIO-RK" id="Q8TCD6"/>
<dbReference type="SignaLink" id="Q8TCD6"/>
<dbReference type="BioGRID-ORCS" id="493911">
    <property type="hits" value="8 hits in 1157 CRISPR screens"/>
</dbReference>
<dbReference type="GenomeRNAi" id="493911"/>
<dbReference type="Pharos" id="Q8TCD6">
    <property type="development level" value="Tbio"/>
</dbReference>
<dbReference type="PRO" id="PR:Q8TCD6"/>
<dbReference type="Proteomes" id="UP000005640">
    <property type="component" value="Chromosome 2"/>
</dbReference>
<dbReference type="RNAct" id="Q8TCD6">
    <property type="molecule type" value="protein"/>
</dbReference>
<dbReference type="Bgee" id="ENSG00000144362">
    <property type="expression patterns" value="Expressed in secondary oocyte and 173 other cell types or tissues"/>
</dbReference>
<dbReference type="ExpressionAtlas" id="Q8TCD6">
    <property type="expression patterns" value="baseline and differential"/>
</dbReference>
<dbReference type="GO" id="GO:0046872">
    <property type="term" value="F:metal ion binding"/>
    <property type="evidence" value="ECO:0007669"/>
    <property type="project" value="UniProtKB-KW"/>
</dbReference>
<dbReference type="GO" id="GO:0016791">
    <property type="term" value="F:phosphatase activity"/>
    <property type="evidence" value="ECO:0000318"/>
    <property type="project" value="GO_Central"/>
</dbReference>
<dbReference type="GO" id="GO:0033883">
    <property type="term" value="F:pyridoxal phosphatase activity"/>
    <property type="evidence" value="ECO:0007669"/>
    <property type="project" value="UniProtKB-EC"/>
</dbReference>
<dbReference type="CDD" id="cd16418">
    <property type="entry name" value="HAD_Pase"/>
    <property type="match status" value="1"/>
</dbReference>
<dbReference type="Gene3D" id="3.40.50.1000">
    <property type="entry name" value="HAD superfamily/HAD-like"/>
    <property type="match status" value="1"/>
</dbReference>
<dbReference type="InterPro" id="IPR036412">
    <property type="entry name" value="HAD-like_sf"/>
</dbReference>
<dbReference type="InterPro" id="IPR006384">
    <property type="entry name" value="HAD_hydro_PyrdxlP_Pase-like"/>
</dbReference>
<dbReference type="InterPro" id="IPR023214">
    <property type="entry name" value="HAD_sf"/>
</dbReference>
<dbReference type="InterPro" id="IPR016965">
    <property type="entry name" value="Pase_PHOSPHO-typ"/>
</dbReference>
<dbReference type="NCBIfam" id="TIGR01489">
    <property type="entry name" value="DKMTPPase-SF"/>
    <property type="match status" value="1"/>
</dbReference>
<dbReference type="NCBIfam" id="TIGR01488">
    <property type="entry name" value="HAD-SF-IB"/>
    <property type="match status" value="1"/>
</dbReference>
<dbReference type="PANTHER" id="PTHR20889">
    <property type="entry name" value="PHOSPHATASE, ORPHAN 1, 2"/>
    <property type="match status" value="1"/>
</dbReference>
<dbReference type="PANTHER" id="PTHR20889:SF1">
    <property type="entry name" value="PYRIDOXAL PHOSPHATE PHOSPHATASE PHOSPHO2"/>
    <property type="match status" value="1"/>
</dbReference>
<dbReference type="Pfam" id="PF06888">
    <property type="entry name" value="Put_Phosphatase"/>
    <property type="match status" value="1"/>
</dbReference>
<dbReference type="PIRSF" id="PIRSF031051">
    <property type="entry name" value="PyrdxlP_Pase_PHOSPHO2"/>
    <property type="match status" value="1"/>
</dbReference>
<dbReference type="SUPFAM" id="SSF56784">
    <property type="entry name" value="HAD-like"/>
    <property type="match status" value="1"/>
</dbReference>
<reference key="1">
    <citation type="journal article" date="2004" name="Nat. Genet.">
        <title>Complete sequencing and characterization of 21,243 full-length human cDNAs.</title>
        <authorList>
            <person name="Ota T."/>
            <person name="Suzuki Y."/>
            <person name="Nishikawa T."/>
            <person name="Otsuki T."/>
            <person name="Sugiyama T."/>
            <person name="Irie R."/>
            <person name="Wakamatsu A."/>
            <person name="Hayashi K."/>
            <person name="Sato H."/>
            <person name="Nagai K."/>
            <person name="Kimura K."/>
            <person name="Makita H."/>
            <person name="Sekine M."/>
            <person name="Obayashi M."/>
            <person name="Nishi T."/>
            <person name="Shibahara T."/>
            <person name="Tanaka T."/>
            <person name="Ishii S."/>
            <person name="Yamamoto J."/>
            <person name="Saito K."/>
            <person name="Kawai Y."/>
            <person name="Isono Y."/>
            <person name="Nakamura Y."/>
            <person name="Nagahari K."/>
            <person name="Murakami K."/>
            <person name="Yasuda T."/>
            <person name="Iwayanagi T."/>
            <person name="Wagatsuma M."/>
            <person name="Shiratori A."/>
            <person name="Sudo H."/>
            <person name="Hosoiri T."/>
            <person name="Kaku Y."/>
            <person name="Kodaira H."/>
            <person name="Kondo H."/>
            <person name="Sugawara M."/>
            <person name="Takahashi M."/>
            <person name="Kanda K."/>
            <person name="Yokoi T."/>
            <person name="Furuya T."/>
            <person name="Kikkawa E."/>
            <person name="Omura Y."/>
            <person name="Abe K."/>
            <person name="Kamihara K."/>
            <person name="Katsuta N."/>
            <person name="Sato K."/>
            <person name="Tanikawa M."/>
            <person name="Yamazaki M."/>
            <person name="Ninomiya K."/>
            <person name="Ishibashi T."/>
            <person name="Yamashita H."/>
            <person name="Murakawa K."/>
            <person name="Fujimori K."/>
            <person name="Tanai H."/>
            <person name="Kimata M."/>
            <person name="Watanabe M."/>
            <person name="Hiraoka S."/>
            <person name="Chiba Y."/>
            <person name="Ishida S."/>
            <person name="Ono Y."/>
            <person name="Takiguchi S."/>
            <person name="Watanabe S."/>
            <person name="Yosida M."/>
            <person name="Hotuta T."/>
            <person name="Kusano J."/>
            <person name="Kanehori K."/>
            <person name="Takahashi-Fujii A."/>
            <person name="Hara H."/>
            <person name="Tanase T.-O."/>
            <person name="Nomura Y."/>
            <person name="Togiya S."/>
            <person name="Komai F."/>
            <person name="Hara R."/>
            <person name="Takeuchi K."/>
            <person name="Arita M."/>
            <person name="Imose N."/>
            <person name="Musashino K."/>
            <person name="Yuuki H."/>
            <person name="Oshima A."/>
            <person name="Sasaki N."/>
            <person name="Aotsuka S."/>
            <person name="Yoshikawa Y."/>
            <person name="Matsunawa H."/>
            <person name="Ichihara T."/>
            <person name="Shiohata N."/>
            <person name="Sano S."/>
            <person name="Moriya S."/>
            <person name="Momiyama H."/>
            <person name="Satoh N."/>
            <person name="Takami S."/>
            <person name="Terashima Y."/>
            <person name="Suzuki O."/>
            <person name="Nakagawa S."/>
            <person name="Senoh A."/>
            <person name="Mizoguchi H."/>
            <person name="Goto Y."/>
            <person name="Shimizu F."/>
            <person name="Wakebe H."/>
            <person name="Hishigaki H."/>
            <person name="Watanabe T."/>
            <person name="Sugiyama A."/>
            <person name="Takemoto M."/>
            <person name="Kawakami B."/>
            <person name="Yamazaki M."/>
            <person name="Watanabe K."/>
            <person name="Kumagai A."/>
            <person name="Itakura S."/>
            <person name="Fukuzumi Y."/>
            <person name="Fujimori Y."/>
            <person name="Komiyama M."/>
            <person name="Tashiro H."/>
            <person name="Tanigami A."/>
            <person name="Fujiwara T."/>
            <person name="Ono T."/>
            <person name="Yamada K."/>
            <person name="Fujii Y."/>
            <person name="Ozaki K."/>
            <person name="Hirao M."/>
            <person name="Ohmori Y."/>
            <person name="Kawabata A."/>
            <person name="Hikiji T."/>
            <person name="Kobatake N."/>
            <person name="Inagaki H."/>
            <person name="Ikema Y."/>
            <person name="Okamoto S."/>
            <person name="Okitani R."/>
            <person name="Kawakami T."/>
            <person name="Noguchi S."/>
            <person name="Itoh T."/>
            <person name="Shigeta K."/>
            <person name="Senba T."/>
            <person name="Matsumura K."/>
            <person name="Nakajima Y."/>
            <person name="Mizuno T."/>
            <person name="Morinaga M."/>
            <person name="Sasaki M."/>
            <person name="Togashi T."/>
            <person name="Oyama M."/>
            <person name="Hata H."/>
            <person name="Watanabe M."/>
            <person name="Komatsu T."/>
            <person name="Mizushima-Sugano J."/>
            <person name="Satoh T."/>
            <person name="Shirai Y."/>
            <person name="Takahashi Y."/>
            <person name="Nakagawa K."/>
            <person name="Okumura K."/>
            <person name="Nagase T."/>
            <person name="Nomura N."/>
            <person name="Kikuchi H."/>
            <person name="Masuho Y."/>
            <person name="Yamashita R."/>
            <person name="Nakai K."/>
            <person name="Yada T."/>
            <person name="Nakamura Y."/>
            <person name="Ohara O."/>
            <person name="Isogai T."/>
            <person name="Sugano S."/>
        </authorList>
    </citation>
    <scope>NUCLEOTIDE SEQUENCE [LARGE SCALE MRNA]</scope>
    <source>
        <tissue>Brain</tissue>
    </source>
</reference>
<reference key="2">
    <citation type="journal article" date="2005" name="Nature">
        <title>Generation and annotation of the DNA sequences of human chromosomes 2 and 4.</title>
        <authorList>
            <person name="Hillier L.W."/>
            <person name="Graves T.A."/>
            <person name="Fulton R.S."/>
            <person name="Fulton L.A."/>
            <person name="Pepin K.H."/>
            <person name="Minx P."/>
            <person name="Wagner-McPherson C."/>
            <person name="Layman D."/>
            <person name="Wylie K."/>
            <person name="Sekhon M."/>
            <person name="Becker M.C."/>
            <person name="Fewell G.A."/>
            <person name="Delehaunty K.D."/>
            <person name="Miner T.L."/>
            <person name="Nash W.E."/>
            <person name="Kremitzki C."/>
            <person name="Oddy L."/>
            <person name="Du H."/>
            <person name="Sun H."/>
            <person name="Bradshaw-Cordum H."/>
            <person name="Ali J."/>
            <person name="Carter J."/>
            <person name="Cordes M."/>
            <person name="Harris A."/>
            <person name="Isak A."/>
            <person name="van Brunt A."/>
            <person name="Nguyen C."/>
            <person name="Du F."/>
            <person name="Courtney L."/>
            <person name="Kalicki J."/>
            <person name="Ozersky P."/>
            <person name="Abbott S."/>
            <person name="Armstrong J."/>
            <person name="Belter E.A."/>
            <person name="Caruso L."/>
            <person name="Cedroni M."/>
            <person name="Cotton M."/>
            <person name="Davidson T."/>
            <person name="Desai A."/>
            <person name="Elliott G."/>
            <person name="Erb T."/>
            <person name="Fronick C."/>
            <person name="Gaige T."/>
            <person name="Haakenson W."/>
            <person name="Haglund K."/>
            <person name="Holmes A."/>
            <person name="Harkins R."/>
            <person name="Kim K."/>
            <person name="Kruchowski S.S."/>
            <person name="Strong C.M."/>
            <person name="Grewal N."/>
            <person name="Goyea E."/>
            <person name="Hou S."/>
            <person name="Levy A."/>
            <person name="Martinka S."/>
            <person name="Mead K."/>
            <person name="McLellan M.D."/>
            <person name="Meyer R."/>
            <person name="Randall-Maher J."/>
            <person name="Tomlinson C."/>
            <person name="Dauphin-Kohlberg S."/>
            <person name="Kozlowicz-Reilly A."/>
            <person name="Shah N."/>
            <person name="Swearengen-Shahid S."/>
            <person name="Snider J."/>
            <person name="Strong J.T."/>
            <person name="Thompson J."/>
            <person name="Yoakum M."/>
            <person name="Leonard S."/>
            <person name="Pearman C."/>
            <person name="Trani L."/>
            <person name="Radionenko M."/>
            <person name="Waligorski J.E."/>
            <person name="Wang C."/>
            <person name="Rock S.M."/>
            <person name="Tin-Wollam A.-M."/>
            <person name="Maupin R."/>
            <person name="Latreille P."/>
            <person name="Wendl M.C."/>
            <person name="Yang S.-P."/>
            <person name="Pohl C."/>
            <person name="Wallis J.W."/>
            <person name="Spieth J."/>
            <person name="Bieri T.A."/>
            <person name="Berkowicz N."/>
            <person name="Nelson J.O."/>
            <person name="Osborne J."/>
            <person name="Ding L."/>
            <person name="Meyer R."/>
            <person name="Sabo A."/>
            <person name="Shotland Y."/>
            <person name="Sinha P."/>
            <person name="Wohldmann P.E."/>
            <person name="Cook L.L."/>
            <person name="Hickenbotham M.T."/>
            <person name="Eldred J."/>
            <person name="Williams D."/>
            <person name="Jones T.A."/>
            <person name="She X."/>
            <person name="Ciccarelli F.D."/>
            <person name="Izaurralde E."/>
            <person name="Taylor J."/>
            <person name="Schmutz J."/>
            <person name="Myers R.M."/>
            <person name="Cox D.R."/>
            <person name="Huang X."/>
            <person name="McPherson J.D."/>
            <person name="Mardis E.R."/>
            <person name="Clifton S.W."/>
            <person name="Warren W.C."/>
            <person name="Chinwalla A.T."/>
            <person name="Eddy S.R."/>
            <person name="Marra M.A."/>
            <person name="Ovcharenko I."/>
            <person name="Furey T.S."/>
            <person name="Miller W."/>
            <person name="Eichler E.E."/>
            <person name="Bork P."/>
            <person name="Suyama M."/>
            <person name="Torrents D."/>
            <person name="Waterston R.H."/>
            <person name="Wilson R.K."/>
        </authorList>
    </citation>
    <scope>NUCLEOTIDE SEQUENCE [LARGE SCALE GENOMIC DNA]</scope>
</reference>
<reference key="3">
    <citation type="submission" date="2005-09" db="EMBL/GenBank/DDBJ databases">
        <authorList>
            <person name="Mural R.J."/>
            <person name="Istrail S."/>
            <person name="Sutton G.G."/>
            <person name="Florea L."/>
            <person name="Halpern A.L."/>
            <person name="Mobarry C.M."/>
            <person name="Lippert R."/>
            <person name="Walenz B."/>
            <person name="Shatkay H."/>
            <person name="Dew I."/>
            <person name="Miller J.R."/>
            <person name="Flanigan M.J."/>
            <person name="Edwards N.J."/>
            <person name="Bolanos R."/>
            <person name="Fasulo D."/>
            <person name="Halldorsson B.V."/>
            <person name="Hannenhalli S."/>
            <person name="Turner R."/>
            <person name="Yooseph S."/>
            <person name="Lu F."/>
            <person name="Nusskern D.R."/>
            <person name="Shue B.C."/>
            <person name="Zheng X.H."/>
            <person name="Zhong F."/>
            <person name="Delcher A.L."/>
            <person name="Huson D.H."/>
            <person name="Kravitz S.A."/>
            <person name="Mouchard L."/>
            <person name="Reinert K."/>
            <person name="Remington K.A."/>
            <person name="Clark A.G."/>
            <person name="Waterman M.S."/>
            <person name="Eichler E.E."/>
            <person name="Adams M.D."/>
            <person name="Hunkapiller M.W."/>
            <person name="Myers E.W."/>
            <person name="Venter J.C."/>
        </authorList>
    </citation>
    <scope>NUCLEOTIDE SEQUENCE [LARGE SCALE GENOMIC DNA]</scope>
</reference>
<reference key="4">
    <citation type="journal article" date="2004" name="Genome Res.">
        <title>The status, quality, and expansion of the NIH full-length cDNA project: the Mammalian Gene Collection (MGC).</title>
        <authorList>
            <consortium name="The MGC Project Team"/>
        </authorList>
    </citation>
    <scope>NUCLEOTIDE SEQUENCE [LARGE SCALE MRNA]</scope>
    <source>
        <tissue>Bone</tissue>
        <tissue>Lung</tissue>
    </source>
</reference>
<reference key="5">
    <citation type="journal article" date="2005" name="Biochim. Biophys. Acta">
        <title>Probing the substrate specificities of human PHOSPHO1 and PHOSPHO2.</title>
        <authorList>
            <person name="Roberts S.J."/>
            <person name="Stewart A.J."/>
            <person name="Schmid R."/>
            <person name="Blindauer C.A."/>
            <person name="Bond S.R."/>
            <person name="Sadler P.J."/>
            <person name="Farquharson C."/>
        </authorList>
    </citation>
    <scope>FUNCTION</scope>
    <scope>CATALYTIC ACTIVITY</scope>
    <scope>BIOPHYSICOCHEMICAL PROPERTIES</scope>
</reference>
<protein>
    <recommendedName>
        <fullName>Pyridoxal phosphate phosphatase PHOSPHO2</fullName>
        <ecNumber evidence="3">3.1.3.74</ecNumber>
    </recommendedName>
</protein>
<comment type="function">
    <text evidence="3">Phosphatase that has high activity toward pyridoxal 5'-phosphate (PLP). Also active at much lower level toward pyrophosphate, phosphoethanolamine (PEA), phosphocholine (PCho), phospho-l-tyrosine, fructose-6-phosphate, p-nitrophenyl phosphate, and h-glycerophosphate.</text>
</comment>
<comment type="catalytic activity">
    <reaction evidence="3">
        <text>pyridoxal 5'-phosphate + H2O = pyridoxal + phosphate</text>
        <dbReference type="Rhea" id="RHEA:20533"/>
        <dbReference type="ChEBI" id="CHEBI:15377"/>
        <dbReference type="ChEBI" id="CHEBI:17310"/>
        <dbReference type="ChEBI" id="CHEBI:43474"/>
        <dbReference type="ChEBI" id="CHEBI:597326"/>
        <dbReference type="EC" id="3.1.3.74"/>
    </reaction>
</comment>
<comment type="cofactor">
    <cofactor evidence="1">
        <name>Mg(2+)</name>
        <dbReference type="ChEBI" id="CHEBI:18420"/>
    </cofactor>
</comment>
<comment type="biophysicochemical properties">
    <kinetics>
        <KM evidence="3">45.5 uM for pyridoxal 5'-phosphate</KM>
        <Vmax evidence="3">633.0 nmol/min/mg enzyme with pyridoxal 5'-phosphate as substrate</Vmax>
    </kinetics>
</comment>
<comment type="interaction">
    <interactant intactId="EBI-2861380">
        <id>Q8TCD6</id>
    </interactant>
    <interactant intactId="EBI-2606700">
        <id>P18859</id>
        <label>ATP5PF</label>
    </interactant>
    <organismsDiffer>false</organismsDiffer>
    <experiments>5</experiments>
</comment>
<comment type="interaction">
    <interactant intactId="EBI-2861380">
        <id>Q8TCD6</id>
    </interactant>
    <interactant intactId="EBI-2817707">
        <id>Q9BXJ5</id>
        <label>C1QTNF2</label>
    </interactant>
    <organismsDiffer>false</organismsDiffer>
    <experiments>3</experiments>
</comment>
<comment type="interaction">
    <interactant intactId="EBI-2861380">
        <id>Q8TCD6</id>
    </interactant>
    <interactant intactId="EBI-9641086">
        <id>P21333-2</id>
        <label>FLNA</label>
    </interactant>
    <organismsDiffer>false</organismsDiffer>
    <experiments>3</experiments>
</comment>
<comment type="interaction">
    <interactant intactId="EBI-2861380">
        <id>Q8TCD6</id>
    </interactant>
    <interactant intactId="EBI-743722">
        <id>Q5VSY0</id>
        <label>GKAP1</label>
    </interactant>
    <organismsDiffer>false</organismsDiffer>
    <experiments>3</experiments>
</comment>
<comment type="interaction">
    <interactant intactId="EBI-2861380">
        <id>Q8TCD6</id>
    </interactant>
    <interactant intactId="EBI-1055254">
        <id>Q8WXH2</id>
        <label>JPH3</label>
    </interactant>
    <organismsDiffer>false</organismsDiffer>
    <experiments>3</experiments>
</comment>
<comment type="interaction">
    <interactant intactId="EBI-2861380">
        <id>Q8TCD6</id>
    </interactant>
    <interactant intactId="EBI-8641936">
        <id>Q15742</id>
        <label>NAB2</label>
    </interactant>
    <organismsDiffer>false</organismsDiffer>
    <experiments>6</experiments>
</comment>
<comment type="interaction">
    <interactant intactId="EBI-2861380">
        <id>Q8TCD6</id>
    </interactant>
    <interactant intactId="EBI-372432">
        <id>Q8WW01</id>
        <label>TSEN15</label>
    </interactant>
    <organismsDiffer>false</organismsDiffer>
    <experiments>5</experiments>
</comment>
<comment type="interaction">
    <interactant intactId="EBI-2861380">
        <id>Q8TCD6</id>
    </interactant>
    <interactant intactId="EBI-12157263">
        <id>P40337-2</id>
        <label>VHL</label>
    </interactant>
    <organismsDiffer>false</organismsDiffer>
    <experiments>3</experiments>
</comment>
<comment type="interaction">
    <interactant intactId="EBI-2861380">
        <id>Q8TCD6</id>
    </interactant>
    <interactant intactId="EBI-712969">
        <id>Q9Y3C0</id>
        <label>WASHC3</label>
    </interactant>
    <organismsDiffer>false</organismsDiffer>
    <experiments>5</experiments>
</comment>
<comment type="similarity">
    <text evidence="4">Belongs to the HAD-like hydrolase superfamily. PHOSPHO family.</text>
</comment>